<evidence type="ECO:0000255" key="1">
    <source>
        <dbReference type="HAMAP-Rule" id="MF_00149"/>
    </source>
</evidence>
<accession>B7GIA3</accession>
<organism>
    <name type="scientific">Anoxybacillus flavithermus (strain DSM 21510 / WK1)</name>
    <dbReference type="NCBI Taxonomy" id="491915"/>
    <lineage>
        <taxon>Bacteria</taxon>
        <taxon>Bacillati</taxon>
        <taxon>Bacillota</taxon>
        <taxon>Bacilli</taxon>
        <taxon>Bacillales</taxon>
        <taxon>Anoxybacillaceae</taxon>
        <taxon>Anoxybacillus</taxon>
    </lineage>
</organism>
<reference key="1">
    <citation type="journal article" date="2008" name="Genome Biol.">
        <title>Encapsulated in silica: genome, proteome and physiology of the thermophilic bacterium Anoxybacillus flavithermus WK1.</title>
        <authorList>
            <person name="Saw J.H."/>
            <person name="Mountain B.W."/>
            <person name="Feng L."/>
            <person name="Omelchenko M.V."/>
            <person name="Hou S."/>
            <person name="Saito J.A."/>
            <person name="Stott M.B."/>
            <person name="Li D."/>
            <person name="Zhao G."/>
            <person name="Wu J."/>
            <person name="Galperin M.Y."/>
            <person name="Koonin E.V."/>
            <person name="Makarova K.S."/>
            <person name="Wolf Y.I."/>
            <person name="Rigden D.J."/>
            <person name="Dunfield P.F."/>
            <person name="Wang L."/>
            <person name="Alam M."/>
        </authorList>
    </citation>
    <scope>NUCLEOTIDE SEQUENCE [LARGE SCALE GENOMIC DNA]</scope>
    <source>
        <strain>DSM 21510 / WK1</strain>
    </source>
</reference>
<comment type="function">
    <text evidence="1">This protein is involved in the repair of mismatches in DNA. It is required for dam-dependent methyl-directed DNA mismatch repair. May act as a 'molecular matchmaker', a protein that promotes the formation of a stable complex between two or more DNA-binding proteins in an ATP-dependent manner without itself being part of a final effector complex.</text>
</comment>
<comment type="similarity">
    <text evidence="1">Belongs to the DNA mismatch repair MutL/HexB family.</text>
</comment>
<feature type="chain" id="PRO_1000192153" description="DNA mismatch repair protein MutL">
    <location>
        <begin position="1"/>
        <end position="608"/>
    </location>
</feature>
<dbReference type="EMBL" id="CP000922">
    <property type="protein sequence ID" value="ACJ33885.1"/>
    <property type="molecule type" value="Genomic_DNA"/>
</dbReference>
<dbReference type="RefSeq" id="WP_012575114.1">
    <property type="nucleotide sequence ID" value="NC_011567.1"/>
</dbReference>
<dbReference type="SMR" id="B7GIA3"/>
<dbReference type="STRING" id="491915.Aflv_1519"/>
<dbReference type="GeneID" id="7037774"/>
<dbReference type="KEGG" id="afl:Aflv_1519"/>
<dbReference type="PATRIC" id="fig|491915.6.peg.1564"/>
<dbReference type="eggNOG" id="COG0323">
    <property type="taxonomic scope" value="Bacteria"/>
</dbReference>
<dbReference type="HOGENOM" id="CLU_004131_4_2_9"/>
<dbReference type="Proteomes" id="UP000000742">
    <property type="component" value="Chromosome"/>
</dbReference>
<dbReference type="GO" id="GO:0032300">
    <property type="term" value="C:mismatch repair complex"/>
    <property type="evidence" value="ECO:0007669"/>
    <property type="project" value="InterPro"/>
</dbReference>
<dbReference type="GO" id="GO:0005524">
    <property type="term" value="F:ATP binding"/>
    <property type="evidence" value="ECO:0007669"/>
    <property type="project" value="InterPro"/>
</dbReference>
<dbReference type="GO" id="GO:0016887">
    <property type="term" value="F:ATP hydrolysis activity"/>
    <property type="evidence" value="ECO:0007669"/>
    <property type="project" value="InterPro"/>
</dbReference>
<dbReference type="GO" id="GO:0140664">
    <property type="term" value="F:ATP-dependent DNA damage sensor activity"/>
    <property type="evidence" value="ECO:0007669"/>
    <property type="project" value="InterPro"/>
</dbReference>
<dbReference type="GO" id="GO:0030983">
    <property type="term" value="F:mismatched DNA binding"/>
    <property type="evidence" value="ECO:0007669"/>
    <property type="project" value="InterPro"/>
</dbReference>
<dbReference type="GO" id="GO:0006298">
    <property type="term" value="P:mismatch repair"/>
    <property type="evidence" value="ECO:0007669"/>
    <property type="project" value="UniProtKB-UniRule"/>
</dbReference>
<dbReference type="CDD" id="cd16926">
    <property type="entry name" value="HATPase_MutL-MLH-PMS-like"/>
    <property type="match status" value="1"/>
</dbReference>
<dbReference type="CDD" id="cd00782">
    <property type="entry name" value="MutL_Trans"/>
    <property type="match status" value="1"/>
</dbReference>
<dbReference type="FunFam" id="3.30.1370.100:FF:000004">
    <property type="entry name" value="DNA mismatch repair endonuclease MutL"/>
    <property type="match status" value="1"/>
</dbReference>
<dbReference type="FunFam" id="3.30.565.10:FF:000003">
    <property type="entry name" value="DNA mismatch repair endonuclease MutL"/>
    <property type="match status" value="1"/>
</dbReference>
<dbReference type="Gene3D" id="3.30.230.10">
    <property type="match status" value="1"/>
</dbReference>
<dbReference type="Gene3D" id="3.30.565.10">
    <property type="entry name" value="Histidine kinase-like ATPase, C-terminal domain"/>
    <property type="match status" value="1"/>
</dbReference>
<dbReference type="Gene3D" id="3.30.1540.20">
    <property type="entry name" value="MutL, C-terminal domain, dimerisation subdomain"/>
    <property type="match status" value="1"/>
</dbReference>
<dbReference type="Gene3D" id="3.30.1370.100">
    <property type="entry name" value="MutL, C-terminal domain, regulatory subdomain"/>
    <property type="match status" value="1"/>
</dbReference>
<dbReference type="HAMAP" id="MF_00149">
    <property type="entry name" value="DNA_mis_repair"/>
    <property type="match status" value="1"/>
</dbReference>
<dbReference type="InterPro" id="IPR014762">
    <property type="entry name" value="DNA_mismatch_repair_CS"/>
</dbReference>
<dbReference type="InterPro" id="IPR020667">
    <property type="entry name" value="DNA_mismatch_repair_MutL"/>
</dbReference>
<dbReference type="InterPro" id="IPR013507">
    <property type="entry name" value="DNA_mismatch_S5_2-like"/>
</dbReference>
<dbReference type="InterPro" id="IPR036890">
    <property type="entry name" value="HATPase_C_sf"/>
</dbReference>
<dbReference type="InterPro" id="IPR002099">
    <property type="entry name" value="MutL/Mlh/PMS"/>
</dbReference>
<dbReference type="InterPro" id="IPR038973">
    <property type="entry name" value="MutL/Mlh/Pms-like"/>
</dbReference>
<dbReference type="InterPro" id="IPR014790">
    <property type="entry name" value="MutL_C"/>
</dbReference>
<dbReference type="InterPro" id="IPR042120">
    <property type="entry name" value="MutL_C_dimsub"/>
</dbReference>
<dbReference type="InterPro" id="IPR042121">
    <property type="entry name" value="MutL_C_regsub"/>
</dbReference>
<dbReference type="InterPro" id="IPR037198">
    <property type="entry name" value="MutL_C_sf"/>
</dbReference>
<dbReference type="InterPro" id="IPR020568">
    <property type="entry name" value="Ribosomal_Su5_D2-typ_SF"/>
</dbReference>
<dbReference type="InterPro" id="IPR014721">
    <property type="entry name" value="Ribsml_uS5_D2-typ_fold_subgr"/>
</dbReference>
<dbReference type="NCBIfam" id="TIGR00585">
    <property type="entry name" value="mutl"/>
    <property type="match status" value="1"/>
</dbReference>
<dbReference type="NCBIfam" id="NF000950">
    <property type="entry name" value="PRK00095.1-3"/>
    <property type="match status" value="1"/>
</dbReference>
<dbReference type="PANTHER" id="PTHR10073">
    <property type="entry name" value="DNA MISMATCH REPAIR PROTEIN MLH, PMS, MUTL"/>
    <property type="match status" value="1"/>
</dbReference>
<dbReference type="PANTHER" id="PTHR10073:SF12">
    <property type="entry name" value="DNA MISMATCH REPAIR PROTEIN MLH1"/>
    <property type="match status" value="1"/>
</dbReference>
<dbReference type="Pfam" id="PF01119">
    <property type="entry name" value="DNA_mis_repair"/>
    <property type="match status" value="1"/>
</dbReference>
<dbReference type="Pfam" id="PF13589">
    <property type="entry name" value="HATPase_c_3"/>
    <property type="match status" value="1"/>
</dbReference>
<dbReference type="Pfam" id="PF08676">
    <property type="entry name" value="MutL_C"/>
    <property type="match status" value="1"/>
</dbReference>
<dbReference type="SMART" id="SM01340">
    <property type="entry name" value="DNA_mis_repair"/>
    <property type="match status" value="1"/>
</dbReference>
<dbReference type="SMART" id="SM00853">
    <property type="entry name" value="MutL_C"/>
    <property type="match status" value="1"/>
</dbReference>
<dbReference type="SUPFAM" id="SSF55874">
    <property type="entry name" value="ATPase domain of HSP90 chaperone/DNA topoisomerase II/histidine kinase"/>
    <property type="match status" value="1"/>
</dbReference>
<dbReference type="SUPFAM" id="SSF118116">
    <property type="entry name" value="DNA mismatch repair protein MutL"/>
    <property type="match status" value="1"/>
</dbReference>
<dbReference type="SUPFAM" id="SSF54211">
    <property type="entry name" value="Ribosomal protein S5 domain 2-like"/>
    <property type="match status" value="1"/>
</dbReference>
<dbReference type="PROSITE" id="PS00058">
    <property type="entry name" value="DNA_MISMATCH_REPAIR_1"/>
    <property type="match status" value="1"/>
</dbReference>
<sequence>MGKIRKLDDALANKIAAGEVVERPASVVKELVENAIDAHSTIIEVELEEAGLAKIRVVDNGDGFEEEDCFLAFERHATSKIKDEADLFRIRTLGFRGEALPSIASVSHLELKTSTGEGPGTWLVLKGGELVQHGRTSSRKGTDITVSHLFFNTPARLKYMKTIHTELGHVVDVINRLALAHPHISFRLTHNGKQLFYTNGNGDVRQVLAAIYGLDVAKKMIAIHAETLDFTIDGYVALPEVTRASRNYMTTIVNGRYIKNYSLYKAIEEGYHTLLPIGRHPITFLNIMMDPLLIDVNVHPAKLEVRFSKETELNELVQQTIRQSFQKKTLIPEVTAPRVEKTKAEQQTFSFEHIVKESNTMSPRVTEIHRDQEKKTEERIVLEKSDEHVRDQDVTLLDVESVVPSEHVTGEMDQERIPPLYPIGQMHGTYILAQNENGLYIIDQHAAQERIKYEYFREKLATVTNELQPLLIPLTLTYSSSEYLLIESYRDQLAACGVFLEPFGHNSFIVRSHPQWFPKGEEVAIIEEMIKQVLEMKKVDMKQLREKAAIMMSCKQSIKANQFLRNDEIFALLESLRKTSDPFTCPHGRPIIIHFSTYELEKMFKRVM</sequence>
<name>MUTL_ANOFW</name>
<proteinExistence type="inferred from homology"/>
<protein>
    <recommendedName>
        <fullName evidence="1">DNA mismatch repair protein MutL</fullName>
    </recommendedName>
</protein>
<gene>
    <name evidence="1" type="primary">mutL</name>
    <name type="ordered locus">Aflv_1519</name>
</gene>
<keyword id="KW-0227">DNA damage</keyword>
<keyword id="KW-0234">DNA repair</keyword>